<name>MURC_STRPJ</name>
<sequence>MSKTYHFIGIKGSGMSALALMLYQMGHKVQGSDVEKYYFTQRGLEQAGITILPFDEKNLDGDMEIIAGNAFRPDNNVEIVYADQNGISYKRYHEFLGSFMRDFVSMGVAGAHGKTSTTGMLSHVLSHITDTSFLIGDGTGRGSANAKYFVFESDEYERHFMPYHPEYSIITNIDFDHPDYFTSLEDVFNAFNDYAKQITKGLFVYGEDAELRKITSDAPIYYYGFEAEGNDFVASDLLRSTTGSTFTVHFRGQNLGQFHIPTFGRHNIMNATAVIGLLYTAGFDLNLVREHLKTFSGVKRRFTEKIVNDTVIIDDFAHHPTEIIATLDAARQKYPSKEIVAVFQPHTFTRTIALLDDFAHALNQADAVYLAQIYGSAREVDHGDVKVEDLANKINKKHQVITVENVSPLLDHDNAVYVFMGAGDIQTYEYSFERLLSNLTSNVQ</sequence>
<protein>
    <recommendedName>
        <fullName evidence="1">UDP-N-acetylmuramate--L-alanine ligase</fullName>
        <ecNumber evidence="1">6.3.2.8</ecNumber>
    </recommendedName>
    <alternativeName>
        <fullName evidence="1">UDP-N-acetylmuramoyl-L-alanine synthetase</fullName>
    </alternativeName>
</protein>
<dbReference type="EC" id="6.3.2.8" evidence="1"/>
<dbReference type="EMBL" id="FM211187">
    <property type="protein sequence ID" value="CAR69267.1"/>
    <property type="molecule type" value="Genomic_DNA"/>
</dbReference>
<dbReference type="RefSeq" id="WP_000048117.1">
    <property type="nucleotide sequence ID" value="NC_011900.1"/>
</dbReference>
<dbReference type="SMR" id="B8ZLC2"/>
<dbReference type="KEGG" id="sne:SPN23F14850"/>
<dbReference type="HOGENOM" id="CLU_028104_1_0_9"/>
<dbReference type="UniPathway" id="UPA00219"/>
<dbReference type="GO" id="GO:0005737">
    <property type="term" value="C:cytoplasm"/>
    <property type="evidence" value="ECO:0007669"/>
    <property type="project" value="UniProtKB-SubCell"/>
</dbReference>
<dbReference type="GO" id="GO:0005524">
    <property type="term" value="F:ATP binding"/>
    <property type="evidence" value="ECO:0007669"/>
    <property type="project" value="UniProtKB-UniRule"/>
</dbReference>
<dbReference type="GO" id="GO:0008763">
    <property type="term" value="F:UDP-N-acetylmuramate-L-alanine ligase activity"/>
    <property type="evidence" value="ECO:0007669"/>
    <property type="project" value="UniProtKB-UniRule"/>
</dbReference>
<dbReference type="GO" id="GO:0051301">
    <property type="term" value="P:cell division"/>
    <property type="evidence" value="ECO:0007669"/>
    <property type="project" value="UniProtKB-KW"/>
</dbReference>
<dbReference type="GO" id="GO:0071555">
    <property type="term" value="P:cell wall organization"/>
    <property type="evidence" value="ECO:0007669"/>
    <property type="project" value="UniProtKB-KW"/>
</dbReference>
<dbReference type="GO" id="GO:0009252">
    <property type="term" value="P:peptidoglycan biosynthetic process"/>
    <property type="evidence" value="ECO:0007669"/>
    <property type="project" value="UniProtKB-UniRule"/>
</dbReference>
<dbReference type="GO" id="GO:0008360">
    <property type="term" value="P:regulation of cell shape"/>
    <property type="evidence" value="ECO:0007669"/>
    <property type="project" value="UniProtKB-KW"/>
</dbReference>
<dbReference type="Gene3D" id="3.90.190.20">
    <property type="entry name" value="Mur ligase, C-terminal domain"/>
    <property type="match status" value="1"/>
</dbReference>
<dbReference type="Gene3D" id="3.40.1190.10">
    <property type="entry name" value="Mur-like, catalytic domain"/>
    <property type="match status" value="1"/>
</dbReference>
<dbReference type="Gene3D" id="3.40.50.720">
    <property type="entry name" value="NAD(P)-binding Rossmann-like Domain"/>
    <property type="match status" value="1"/>
</dbReference>
<dbReference type="HAMAP" id="MF_00046">
    <property type="entry name" value="MurC"/>
    <property type="match status" value="1"/>
</dbReference>
<dbReference type="InterPro" id="IPR036565">
    <property type="entry name" value="Mur-like_cat_sf"/>
</dbReference>
<dbReference type="InterPro" id="IPR004101">
    <property type="entry name" value="Mur_ligase_C"/>
</dbReference>
<dbReference type="InterPro" id="IPR036615">
    <property type="entry name" value="Mur_ligase_C_dom_sf"/>
</dbReference>
<dbReference type="InterPro" id="IPR013221">
    <property type="entry name" value="Mur_ligase_cen"/>
</dbReference>
<dbReference type="InterPro" id="IPR000713">
    <property type="entry name" value="Mur_ligase_N"/>
</dbReference>
<dbReference type="InterPro" id="IPR050061">
    <property type="entry name" value="MurCDEF_pg_biosynth"/>
</dbReference>
<dbReference type="InterPro" id="IPR005758">
    <property type="entry name" value="UDP-N-AcMur_Ala_ligase_MurC"/>
</dbReference>
<dbReference type="NCBIfam" id="TIGR01082">
    <property type="entry name" value="murC"/>
    <property type="match status" value="1"/>
</dbReference>
<dbReference type="PANTHER" id="PTHR43445:SF3">
    <property type="entry name" value="UDP-N-ACETYLMURAMATE--L-ALANINE LIGASE"/>
    <property type="match status" value="1"/>
</dbReference>
<dbReference type="PANTHER" id="PTHR43445">
    <property type="entry name" value="UDP-N-ACETYLMURAMATE--L-ALANINE LIGASE-RELATED"/>
    <property type="match status" value="1"/>
</dbReference>
<dbReference type="Pfam" id="PF01225">
    <property type="entry name" value="Mur_ligase"/>
    <property type="match status" value="1"/>
</dbReference>
<dbReference type="Pfam" id="PF02875">
    <property type="entry name" value="Mur_ligase_C"/>
    <property type="match status" value="1"/>
</dbReference>
<dbReference type="Pfam" id="PF08245">
    <property type="entry name" value="Mur_ligase_M"/>
    <property type="match status" value="1"/>
</dbReference>
<dbReference type="SUPFAM" id="SSF51984">
    <property type="entry name" value="MurCD N-terminal domain"/>
    <property type="match status" value="1"/>
</dbReference>
<dbReference type="SUPFAM" id="SSF53623">
    <property type="entry name" value="MurD-like peptide ligases, catalytic domain"/>
    <property type="match status" value="1"/>
</dbReference>
<dbReference type="SUPFAM" id="SSF53244">
    <property type="entry name" value="MurD-like peptide ligases, peptide-binding domain"/>
    <property type="match status" value="1"/>
</dbReference>
<comment type="function">
    <text evidence="1">Cell wall formation.</text>
</comment>
<comment type="catalytic activity">
    <reaction evidence="1">
        <text>UDP-N-acetyl-alpha-D-muramate + L-alanine + ATP = UDP-N-acetyl-alpha-D-muramoyl-L-alanine + ADP + phosphate + H(+)</text>
        <dbReference type="Rhea" id="RHEA:23372"/>
        <dbReference type="ChEBI" id="CHEBI:15378"/>
        <dbReference type="ChEBI" id="CHEBI:30616"/>
        <dbReference type="ChEBI" id="CHEBI:43474"/>
        <dbReference type="ChEBI" id="CHEBI:57972"/>
        <dbReference type="ChEBI" id="CHEBI:70757"/>
        <dbReference type="ChEBI" id="CHEBI:83898"/>
        <dbReference type="ChEBI" id="CHEBI:456216"/>
        <dbReference type="EC" id="6.3.2.8"/>
    </reaction>
</comment>
<comment type="pathway">
    <text evidence="1">Cell wall biogenesis; peptidoglycan biosynthesis.</text>
</comment>
<comment type="subcellular location">
    <subcellularLocation>
        <location evidence="1">Cytoplasm</location>
    </subcellularLocation>
</comment>
<comment type="similarity">
    <text evidence="1">Belongs to the MurCDEF family.</text>
</comment>
<feature type="chain" id="PRO_1000192114" description="UDP-N-acetylmuramate--L-alanine ligase">
    <location>
        <begin position="1"/>
        <end position="444"/>
    </location>
</feature>
<feature type="binding site" evidence="1">
    <location>
        <begin position="110"/>
        <end position="116"/>
    </location>
    <ligand>
        <name>ATP</name>
        <dbReference type="ChEBI" id="CHEBI:30616"/>
    </ligand>
</feature>
<gene>
    <name evidence="1" type="primary">murC</name>
    <name type="ordered locus">SPN23F14850</name>
</gene>
<organism>
    <name type="scientific">Streptococcus pneumoniae (strain ATCC 700669 / Spain 23F-1)</name>
    <dbReference type="NCBI Taxonomy" id="561276"/>
    <lineage>
        <taxon>Bacteria</taxon>
        <taxon>Bacillati</taxon>
        <taxon>Bacillota</taxon>
        <taxon>Bacilli</taxon>
        <taxon>Lactobacillales</taxon>
        <taxon>Streptococcaceae</taxon>
        <taxon>Streptococcus</taxon>
    </lineage>
</organism>
<accession>B8ZLC2</accession>
<keyword id="KW-0067">ATP-binding</keyword>
<keyword id="KW-0131">Cell cycle</keyword>
<keyword id="KW-0132">Cell division</keyword>
<keyword id="KW-0133">Cell shape</keyword>
<keyword id="KW-0961">Cell wall biogenesis/degradation</keyword>
<keyword id="KW-0963">Cytoplasm</keyword>
<keyword id="KW-0436">Ligase</keyword>
<keyword id="KW-0547">Nucleotide-binding</keyword>
<keyword id="KW-0573">Peptidoglycan synthesis</keyword>
<reference key="1">
    <citation type="journal article" date="2009" name="J. Bacteriol.">
        <title>Role of conjugative elements in the evolution of the multidrug-resistant pandemic clone Streptococcus pneumoniae Spain23F ST81.</title>
        <authorList>
            <person name="Croucher N.J."/>
            <person name="Walker D."/>
            <person name="Romero P."/>
            <person name="Lennard N."/>
            <person name="Paterson G.K."/>
            <person name="Bason N.C."/>
            <person name="Mitchell A.M."/>
            <person name="Quail M.A."/>
            <person name="Andrew P.W."/>
            <person name="Parkhill J."/>
            <person name="Bentley S.D."/>
            <person name="Mitchell T.J."/>
        </authorList>
    </citation>
    <scope>NUCLEOTIDE SEQUENCE [LARGE SCALE GENOMIC DNA]</scope>
    <source>
        <strain>ATCC 700669 / Spain 23F-1</strain>
    </source>
</reference>
<evidence type="ECO:0000255" key="1">
    <source>
        <dbReference type="HAMAP-Rule" id="MF_00046"/>
    </source>
</evidence>
<proteinExistence type="inferred from homology"/>